<accession>P44026</accession>
<feature type="chain" id="PRO_0000077938" description="Uncharacterized protein HI_0633">
    <location>
        <begin position="1"/>
        <end position="98"/>
    </location>
</feature>
<feature type="transmembrane region" description="Helical" evidence="1">
    <location>
        <begin position="14"/>
        <end position="34"/>
    </location>
</feature>
<feature type="transmembrane region" description="Helical" evidence="1">
    <location>
        <begin position="41"/>
        <end position="61"/>
    </location>
</feature>
<proteinExistence type="predicted"/>
<comment type="subcellular location">
    <subcellularLocation>
        <location evidence="2">Cell membrane</location>
        <topology evidence="2">Multi-pass membrane protein</topology>
    </subcellularLocation>
</comment>
<organism>
    <name type="scientific">Haemophilus influenzae (strain ATCC 51907 / DSM 11121 / KW20 / Rd)</name>
    <dbReference type="NCBI Taxonomy" id="71421"/>
    <lineage>
        <taxon>Bacteria</taxon>
        <taxon>Pseudomonadati</taxon>
        <taxon>Pseudomonadota</taxon>
        <taxon>Gammaproteobacteria</taxon>
        <taxon>Pasteurellales</taxon>
        <taxon>Pasteurellaceae</taxon>
        <taxon>Haemophilus</taxon>
    </lineage>
</organism>
<protein>
    <recommendedName>
        <fullName>Uncharacterized protein HI_0633</fullName>
    </recommendedName>
</protein>
<name>Y633_HAEIN</name>
<dbReference type="EMBL" id="L42023">
    <property type="protein sequence ID" value="AAC22297.1"/>
    <property type="molecule type" value="Genomic_DNA"/>
</dbReference>
<dbReference type="PIR" id="H64010">
    <property type="entry name" value="H64010"/>
</dbReference>
<dbReference type="RefSeq" id="NP_438793.2">
    <property type="nucleotide sequence ID" value="NC_000907.1"/>
</dbReference>
<dbReference type="SMR" id="P44026"/>
<dbReference type="STRING" id="71421.HI_0633"/>
<dbReference type="EnsemblBacteria" id="AAC22297">
    <property type="protein sequence ID" value="AAC22297"/>
    <property type="gene ID" value="HI_0633"/>
</dbReference>
<dbReference type="KEGG" id="hin:HI_0633"/>
<dbReference type="PATRIC" id="fig|71421.8.peg.659"/>
<dbReference type="eggNOG" id="COG0038">
    <property type="taxonomic scope" value="Bacteria"/>
</dbReference>
<dbReference type="HOGENOM" id="CLU_162569_0_0_6"/>
<dbReference type="OrthoDB" id="9767361at2"/>
<dbReference type="Proteomes" id="UP000000579">
    <property type="component" value="Chromosome"/>
</dbReference>
<dbReference type="GO" id="GO:0005886">
    <property type="term" value="C:plasma membrane"/>
    <property type="evidence" value="ECO:0007669"/>
    <property type="project" value="UniProtKB-SubCell"/>
</dbReference>
<dbReference type="GO" id="GO:0015108">
    <property type="term" value="F:chloride transmembrane transporter activity"/>
    <property type="evidence" value="ECO:0007669"/>
    <property type="project" value="InterPro"/>
</dbReference>
<dbReference type="Gene3D" id="1.10.3080.10">
    <property type="entry name" value="Clc chloride channel"/>
    <property type="match status" value="1"/>
</dbReference>
<dbReference type="InterPro" id="IPR014743">
    <property type="entry name" value="Cl-channel_core"/>
</dbReference>
<dbReference type="InterPro" id="IPR001807">
    <property type="entry name" value="ClC"/>
</dbReference>
<dbReference type="Pfam" id="PF00654">
    <property type="entry name" value="Voltage_CLC"/>
    <property type="match status" value="1"/>
</dbReference>
<dbReference type="SUPFAM" id="SSF81340">
    <property type="entry name" value="Clc chloride channel"/>
    <property type="match status" value="1"/>
</dbReference>
<gene>
    <name type="ordered locus">HI_0633</name>
</gene>
<keyword id="KW-1003">Cell membrane</keyword>
<keyword id="KW-0472">Membrane</keyword>
<keyword id="KW-1185">Reference proteome</keyword>
<keyword id="KW-0812">Transmembrane</keyword>
<keyword id="KW-1133">Transmembrane helix</keyword>
<sequence length="98" mass="10922">MLWDLSGGMVDQRFLVILCMVAFLAGCTQSPVTASVIVMEMTGAQPVLIWLLISSIIASIISHQFSPKPFYHFAAGCFLQQMQARQAEELRSKTEQEK</sequence>
<reference key="1">
    <citation type="journal article" date="1995" name="Science">
        <title>Whole-genome random sequencing and assembly of Haemophilus influenzae Rd.</title>
        <authorList>
            <person name="Fleischmann R.D."/>
            <person name="Adams M.D."/>
            <person name="White O."/>
            <person name="Clayton R.A."/>
            <person name="Kirkness E.F."/>
            <person name="Kerlavage A.R."/>
            <person name="Bult C.J."/>
            <person name="Tomb J.-F."/>
            <person name="Dougherty B.A."/>
            <person name="Merrick J.M."/>
            <person name="McKenney K."/>
            <person name="Sutton G.G."/>
            <person name="FitzHugh W."/>
            <person name="Fields C.A."/>
            <person name="Gocayne J.D."/>
            <person name="Scott J.D."/>
            <person name="Shirley R."/>
            <person name="Liu L.-I."/>
            <person name="Glodek A."/>
            <person name="Kelley J.M."/>
            <person name="Weidman J.F."/>
            <person name="Phillips C.A."/>
            <person name="Spriggs T."/>
            <person name="Hedblom E."/>
            <person name="Cotton M.D."/>
            <person name="Utterback T.R."/>
            <person name="Hanna M.C."/>
            <person name="Nguyen D.T."/>
            <person name="Saudek D.M."/>
            <person name="Brandon R.C."/>
            <person name="Fine L.D."/>
            <person name="Fritchman J.L."/>
            <person name="Fuhrmann J.L."/>
            <person name="Geoghagen N.S.M."/>
            <person name="Gnehm C.L."/>
            <person name="McDonald L.A."/>
            <person name="Small K.V."/>
            <person name="Fraser C.M."/>
            <person name="Smith H.O."/>
            <person name="Venter J.C."/>
        </authorList>
    </citation>
    <scope>NUCLEOTIDE SEQUENCE [LARGE SCALE GENOMIC DNA]</scope>
    <source>
        <strain>ATCC 51907 / DSM 11121 / KW20 / Rd</strain>
    </source>
</reference>
<evidence type="ECO:0000255" key="1"/>
<evidence type="ECO:0000305" key="2"/>